<evidence type="ECO:0000250" key="1">
    <source>
        <dbReference type="UniProtKB" id="Q4ZJN1"/>
    </source>
</evidence>
<evidence type="ECO:0000255" key="2"/>
<evidence type="ECO:0000255" key="3">
    <source>
        <dbReference type="PROSITE-ProRule" id="PRU00368"/>
    </source>
</evidence>
<evidence type="ECO:0000256" key="4">
    <source>
        <dbReference type="SAM" id="MobiDB-lite"/>
    </source>
</evidence>
<evidence type="ECO:0000269" key="5">
    <source>
    </source>
</evidence>
<evidence type="ECO:0000303" key="6">
    <source>
    </source>
</evidence>
<protein>
    <recommendedName>
        <fullName>Complement C1q and tumor necrosis factor-related protein 9B</fullName>
    </recommendedName>
    <alternativeName>
        <fullName>C1q/TNF-related protein 9B</fullName>
        <shortName>CTRP9B</shortName>
    </alternativeName>
    <alternativeName>
        <fullName>Complement C1q and tumor necrosis factor-related protein 9-like</fullName>
    </alternativeName>
</protein>
<keyword id="KW-0025">Alternative splicing</keyword>
<keyword id="KW-0176">Collagen</keyword>
<keyword id="KW-1267">Proteomics identification</keyword>
<keyword id="KW-1185">Reference proteome</keyword>
<keyword id="KW-0677">Repeat</keyword>
<keyword id="KW-0964">Secreted</keyword>
<keyword id="KW-0732">Signal</keyword>
<accession>B2RNN3</accession>
<accession>A2A3T6</accession>
<accession>B9EH31</accession>
<accession>Q0VGC5</accession>
<accession>Q5VX65</accession>
<accession>Q5VX66</accession>
<accession>Q8IUU4</accession>
<reference key="1">
    <citation type="journal article" date="2004" name="Nature">
        <title>The DNA sequence and analysis of human chromosome 13.</title>
        <authorList>
            <person name="Dunham A."/>
            <person name="Matthews L.H."/>
            <person name="Burton J."/>
            <person name="Ashurst J.L."/>
            <person name="Howe K.L."/>
            <person name="Ashcroft K.J."/>
            <person name="Beare D.M."/>
            <person name="Burford D.C."/>
            <person name="Hunt S.E."/>
            <person name="Griffiths-Jones S."/>
            <person name="Jones M.C."/>
            <person name="Keenan S.J."/>
            <person name="Oliver K."/>
            <person name="Scott C.E."/>
            <person name="Ainscough R."/>
            <person name="Almeida J.P."/>
            <person name="Ambrose K.D."/>
            <person name="Andrews D.T."/>
            <person name="Ashwell R.I.S."/>
            <person name="Babbage A.K."/>
            <person name="Bagguley C.L."/>
            <person name="Bailey J."/>
            <person name="Bannerjee R."/>
            <person name="Barlow K.F."/>
            <person name="Bates K."/>
            <person name="Beasley H."/>
            <person name="Bird C.P."/>
            <person name="Bray-Allen S."/>
            <person name="Brown A.J."/>
            <person name="Brown J.Y."/>
            <person name="Burrill W."/>
            <person name="Carder C."/>
            <person name="Carter N.P."/>
            <person name="Chapman J.C."/>
            <person name="Clamp M.E."/>
            <person name="Clark S.Y."/>
            <person name="Clarke G."/>
            <person name="Clee C.M."/>
            <person name="Clegg S.C."/>
            <person name="Cobley V."/>
            <person name="Collins J.E."/>
            <person name="Corby N."/>
            <person name="Coville G.J."/>
            <person name="Deloukas P."/>
            <person name="Dhami P."/>
            <person name="Dunham I."/>
            <person name="Dunn M."/>
            <person name="Earthrowl M.E."/>
            <person name="Ellington A.G."/>
            <person name="Faulkner L."/>
            <person name="Frankish A.G."/>
            <person name="Frankland J."/>
            <person name="French L."/>
            <person name="Garner P."/>
            <person name="Garnett J."/>
            <person name="Gilbert J.G.R."/>
            <person name="Gilson C.J."/>
            <person name="Ghori J."/>
            <person name="Grafham D.V."/>
            <person name="Gribble S.M."/>
            <person name="Griffiths C."/>
            <person name="Hall R.E."/>
            <person name="Hammond S."/>
            <person name="Harley J.L."/>
            <person name="Hart E.A."/>
            <person name="Heath P.D."/>
            <person name="Howden P.J."/>
            <person name="Huckle E.J."/>
            <person name="Hunt P.J."/>
            <person name="Hunt A.R."/>
            <person name="Johnson C."/>
            <person name="Johnson D."/>
            <person name="Kay M."/>
            <person name="Kimberley A.M."/>
            <person name="King A."/>
            <person name="Laird G.K."/>
            <person name="Langford C.J."/>
            <person name="Lawlor S."/>
            <person name="Leongamornlert D.A."/>
            <person name="Lloyd D.M."/>
            <person name="Lloyd C."/>
            <person name="Loveland J.E."/>
            <person name="Lovell J."/>
            <person name="Martin S."/>
            <person name="Mashreghi-Mohammadi M."/>
            <person name="McLaren S.J."/>
            <person name="McMurray A."/>
            <person name="Milne S."/>
            <person name="Moore M.J.F."/>
            <person name="Nickerson T."/>
            <person name="Palmer S.A."/>
            <person name="Pearce A.V."/>
            <person name="Peck A.I."/>
            <person name="Pelan S."/>
            <person name="Phillimore B."/>
            <person name="Porter K.M."/>
            <person name="Rice C.M."/>
            <person name="Searle S."/>
            <person name="Sehra H.K."/>
            <person name="Shownkeen R."/>
            <person name="Skuce C.D."/>
            <person name="Smith M."/>
            <person name="Steward C.A."/>
            <person name="Sycamore N."/>
            <person name="Tester J."/>
            <person name="Thomas D.W."/>
            <person name="Tracey A."/>
            <person name="Tromans A."/>
            <person name="Tubby B."/>
            <person name="Wall M."/>
            <person name="Wallis J.M."/>
            <person name="West A.P."/>
            <person name="Whitehead S.L."/>
            <person name="Willey D.L."/>
            <person name="Wilming L."/>
            <person name="Wray P.W."/>
            <person name="Wright M.W."/>
            <person name="Young L."/>
            <person name="Coulson A."/>
            <person name="Durbin R.M."/>
            <person name="Hubbard T."/>
            <person name="Sulston J.E."/>
            <person name="Beck S."/>
            <person name="Bentley D.R."/>
            <person name="Rogers J."/>
            <person name="Ross M.T."/>
        </authorList>
    </citation>
    <scope>NUCLEOTIDE SEQUENCE [LARGE SCALE GENOMIC DNA]</scope>
</reference>
<reference key="2">
    <citation type="journal article" date="2004" name="Genome Res.">
        <title>The status, quality, and expansion of the NIH full-length cDNA project: the Mammalian Gene Collection (MGC).</title>
        <authorList>
            <consortium name="The MGC Project Team"/>
        </authorList>
    </citation>
    <scope>NUCLEOTIDE SEQUENCE [LARGE SCALE MRNA] (ISOFORMS 1 AND 2)</scope>
    <source>
        <tissue>Testis</tissue>
    </source>
</reference>
<reference key="3">
    <citation type="journal article" date="2009" name="Biochem. Biophys. Res. Commun.">
        <title>CTRP8 and CTRP9B are novel proteins that hetero-oligomerize with C1q/TNF family members.</title>
        <authorList>
            <person name="Peterson J.M."/>
            <person name="Wei Z."/>
            <person name="Wong G.W."/>
        </authorList>
    </citation>
    <scope>IDENTIFICATION</scope>
    <scope>SUBUNIT</scope>
    <scope>SUBCELLULAR LOCATION</scope>
    <scope>TISSUE SPECIFICITY</scope>
    <source>
        <tissue>Hippocampus</tissue>
    </source>
</reference>
<feature type="signal peptide" evidence="2">
    <location>
        <begin position="1"/>
        <end position="19"/>
    </location>
</feature>
<feature type="chain" id="PRO_0000348424" description="Complement C1q and tumor necrosis factor-related protein 9B">
    <location>
        <begin position="20"/>
        <end position="333"/>
    </location>
</feature>
<feature type="domain" description="Collagen-like 1">
    <location>
        <begin position="24"/>
        <end position="82"/>
    </location>
</feature>
<feature type="domain" description="Collagen-like 2">
    <location>
        <begin position="95"/>
        <end position="154"/>
    </location>
</feature>
<feature type="domain" description="Collagen-like 3">
    <location>
        <begin position="155"/>
        <end position="191"/>
    </location>
</feature>
<feature type="domain" description="C1q" evidence="3">
    <location>
        <begin position="197"/>
        <end position="333"/>
    </location>
</feature>
<feature type="region of interest" description="Disordered" evidence="4">
    <location>
        <begin position="24"/>
        <end position="189"/>
    </location>
</feature>
<feature type="compositionally biased region" description="Low complexity" evidence="4">
    <location>
        <begin position="26"/>
        <end position="40"/>
    </location>
</feature>
<feature type="compositionally biased region" description="Basic and acidic residues" evidence="4">
    <location>
        <begin position="42"/>
        <end position="55"/>
    </location>
</feature>
<feature type="compositionally biased region" description="Basic and acidic residues" evidence="4">
    <location>
        <begin position="69"/>
        <end position="88"/>
    </location>
</feature>
<feature type="splice variant" id="VSP_035153" description="In isoform 2." evidence="6">
    <original>GDQGSRGSPGK</original>
    <variation>EMFRCLWSKME</variation>
    <location>
        <begin position="89"/>
        <end position="99"/>
    </location>
</feature>
<feature type="splice variant" id="VSP_035154" description="In isoform 2." evidence="6">
    <location>
        <begin position="100"/>
        <end position="333"/>
    </location>
</feature>
<gene>
    <name type="primary">C1QTNF9B</name>
</gene>
<sequence>MRIWWLLLAIEICTGNINSQDTCRQGHPGIPGNPGHNGLPGRDGRDGAKGDKGDAGEPGCPGSPGKDGTSGEKGERGADGKVEAKGIKGDQGSRGSPGKHGPKGLAGPMGEKGLRGETGPQGQKGNKGDVGPTGPEGPRGNIGPLGPTGLPGPMGPIGKPGPKGEAGPTGPQGEPGVRGIRGWKGDRGEKGKIGETLVLPKSAFTVGLTVLSKFPSSDVPIKFDKILYNEFNHYDTAVGKFTCHIAGVYYFTYHITVFSRNVQVSLVKNGVKILHTRDAYVSSEDQASGSIVLQLKLGDEMWLQVTGGERFNGLFADEDDDTTFTGFLLFSSQ</sequence>
<name>C1T9B_HUMAN</name>
<dbReference type="EMBL" id="AL445985">
    <property type="status" value="NOT_ANNOTATED_CDS"/>
    <property type="molecule type" value="Genomic_DNA"/>
</dbReference>
<dbReference type="EMBL" id="BC110413">
    <property type="protein sequence ID" value="AAI10414.1"/>
    <property type="molecule type" value="mRNA"/>
</dbReference>
<dbReference type="EMBL" id="BC137004">
    <property type="protein sequence ID" value="AAI37005.1"/>
    <property type="molecule type" value="mRNA"/>
</dbReference>
<dbReference type="EMBL" id="BC137006">
    <property type="protein sequence ID" value="AAI37007.1"/>
    <property type="molecule type" value="mRNA"/>
</dbReference>
<dbReference type="CCDS" id="CCDS31947.1">
    <molecule id="B2RNN3-1"/>
</dbReference>
<dbReference type="RefSeq" id="NP_001007538.1">
    <molecule id="B2RNN3-1"/>
    <property type="nucleotide sequence ID" value="NM_001007537.3"/>
</dbReference>
<dbReference type="RefSeq" id="XP_011533372.1">
    <property type="nucleotide sequence ID" value="XM_011535070.2"/>
</dbReference>
<dbReference type="SMR" id="B2RNN3"/>
<dbReference type="BioGRID" id="132501">
    <property type="interactions" value="65"/>
</dbReference>
<dbReference type="FunCoup" id="B2RNN3">
    <property type="interactions" value="14"/>
</dbReference>
<dbReference type="IntAct" id="B2RNN3">
    <property type="interactions" value="51"/>
</dbReference>
<dbReference type="STRING" id="9606.ENSP00000371572"/>
<dbReference type="GlyGen" id="B2RNN3">
    <property type="glycosylation" value="2 sites"/>
</dbReference>
<dbReference type="iPTMnet" id="B2RNN3"/>
<dbReference type="PhosphoSitePlus" id="B2RNN3"/>
<dbReference type="BioMuta" id="C1QTNF9B"/>
<dbReference type="jPOST" id="B2RNN3"/>
<dbReference type="MassIVE" id="B2RNN3"/>
<dbReference type="PaxDb" id="9606-ENSP00000371572"/>
<dbReference type="PeptideAtlas" id="B2RNN3"/>
<dbReference type="ProteomicsDB" id="3442">
    <molecule id="B2RNN3-1"/>
</dbReference>
<dbReference type="Antibodypedia" id="78005">
    <property type="antibodies" value="33 antibodies from 8 providers"/>
</dbReference>
<dbReference type="DNASU" id="387911"/>
<dbReference type="Ensembl" id="ENST00000382137.8">
    <molecule id="B2RNN3-1"/>
    <property type="protein sequence ID" value="ENSP00000371572.3"/>
    <property type="gene ID" value="ENSG00000205863.12"/>
</dbReference>
<dbReference type="Ensembl" id="ENST00000713589.1">
    <molecule id="B2RNN3-1"/>
    <property type="protein sequence ID" value="ENSP00000518885.1"/>
    <property type="gene ID" value="ENSG00000205863.12"/>
</dbReference>
<dbReference type="GeneID" id="387911"/>
<dbReference type="KEGG" id="hsa:387911"/>
<dbReference type="MANE-Select" id="ENST00000713589.1">
    <property type="protein sequence ID" value="ENSP00000518885.1"/>
    <property type="RefSeq nucleotide sequence ID" value="NM_001007537.3"/>
    <property type="RefSeq protein sequence ID" value="NP_001007538.1"/>
</dbReference>
<dbReference type="UCSC" id="uc001uoz.3">
    <molecule id="B2RNN3-1"/>
    <property type="organism name" value="human"/>
</dbReference>
<dbReference type="AGR" id="HGNC:34072"/>
<dbReference type="CTD" id="387911"/>
<dbReference type="DisGeNET" id="387911"/>
<dbReference type="GeneCards" id="C1QTNF9B"/>
<dbReference type="HGNC" id="HGNC:34072">
    <property type="gene designation" value="C1QTNF9B"/>
</dbReference>
<dbReference type="HPA" id="ENSG00000205863">
    <property type="expression patterns" value="Tissue enhanced (skin, testis)"/>
</dbReference>
<dbReference type="MIM" id="614148">
    <property type="type" value="gene"/>
</dbReference>
<dbReference type="neXtProt" id="NX_B2RNN3"/>
<dbReference type="OpenTargets" id="ENSG00000205863"/>
<dbReference type="VEuPathDB" id="HostDB:ENSG00000205863"/>
<dbReference type="eggNOG" id="ENOG502QVBU">
    <property type="taxonomic scope" value="Eukaryota"/>
</dbReference>
<dbReference type="GeneTree" id="ENSGT00940000154936"/>
<dbReference type="HOGENOM" id="CLU_001074_0_0_1"/>
<dbReference type="InParanoid" id="B2RNN3"/>
<dbReference type="OMA" id="DEMWLQV"/>
<dbReference type="OrthoDB" id="9533734at2759"/>
<dbReference type="PAN-GO" id="B2RNN3">
    <property type="GO annotations" value="0 GO annotations based on evolutionary models"/>
</dbReference>
<dbReference type="PhylomeDB" id="B2RNN3"/>
<dbReference type="TreeFam" id="TF334029"/>
<dbReference type="PathwayCommons" id="B2RNN3"/>
<dbReference type="SignaLink" id="B2RNN3"/>
<dbReference type="BioGRID-ORCS" id="387911">
    <property type="hits" value="14 hits in 1038 CRISPR screens"/>
</dbReference>
<dbReference type="ChiTaRS" id="C1QTNF9B">
    <property type="organism name" value="human"/>
</dbReference>
<dbReference type="GenomeRNAi" id="387911"/>
<dbReference type="Pharos" id="B2RNN3">
    <property type="development level" value="Tdark"/>
</dbReference>
<dbReference type="PRO" id="PR:B2RNN3"/>
<dbReference type="Proteomes" id="UP000005640">
    <property type="component" value="Chromosome 13"/>
</dbReference>
<dbReference type="RNAct" id="B2RNN3">
    <property type="molecule type" value="protein"/>
</dbReference>
<dbReference type="Bgee" id="ENSG00000205863">
    <property type="expression patterns" value="Expressed in primordial germ cell in gonad and 89 other cell types or tissues"/>
</dbReference>
<dbReference type="ExpressionAtlas" id="B2RNN3">
    <property type="expression patterns" value="baseline and differential"/>
</dbReference>
<dbReference type="GO" id="GO:0005581">
    <property type="term" value="C:collagen trimer"/>
    <property type="evidence" value="ECO:0007669"/>
    <property type="project" value="UniProtKB-KW"/>
</dbReference>
<dbReference type="GO" id="GO:0005576">
    <property type="term" value="C:extracellular region"/>
    <property type="evidence" value="ECO:0007669"/>
    <property type="project" value="UniProtKB-SubCell"/>
</dbReference>
<dbReference type="FunFam" id="2.60.120.40:FF:000001">
    <property type="entry name" value="Complement C1q B chain"/>
    <property type="match status" value="1"/>
</dbReference>
<dbReference type="Gene3D" id="2.60.120.40">
    <property type="match status" value="1"/>
</dbReference>
<dbReference type="InterPro" id="IPR001073">
    <property type="entry name" value="C1q_dom"/>
</dbReference>
<dbReference type="InterPro" id="IPR008160">
    <property type="entry name" value="Collagen"/>
</dbReference>
<dbReference type="InterPro" id="IPR050392">
    <property type="entry name" value="Collagen/C1q_domain"/>
</dbReference>
<dbReference type="InterPro" id="IPR008983">
    <property type="entry name" value="Tumour_necrosis_fac-like_dom"/>
</dbReference>
<dbReference type="PANTHER" id="PTHR15427:SF21">
    <property type="entry name" value="COMPLEMENT C1Q AND TUMOR NECROSIS FACTOR-RELATED PROTEIN 9A"/>
    <property type="match status" value="1"/>
</dbReference>
<dbReference type="PANTHER" id="PTHR15427">
    <property type="entry name" value="EMILIN ELASTIN MICROFIBRIL INTERFACE-LOCATED PROTEIN ELASTIN MICROFIBRIL INTERFACER"/>
    <property type="match status" value="1"/>
</dbReference>
<dbReference type="Pfam" id="PF00386">
    <property type="entry name" value="C1q"/>
    <property type="match status" value="1"/>
</dbReference>
<dbReference type="Pfam" id="PF01391">
    <property type="entry name" value="Collagen"/>
    <property type="match status" value="4"/>
</dbReference>
<dbReference type="PRINTS" id="PR00007">
    <property type="entry name" value="COMPLEMNTC1Q"/>
</dbReference>
<dbReference type="SMART" id="SM00110">
    <property type="entry name" value="C1Q"/>
    <property type="match status" value="1"/>
</dbReference>
<dbReference type="SUPFAM" id="SSF49842">
    <property type="entry name" value="TNF-like"/>
    <property type="match status" value="1"/>
</dbReference>
<dbReference type="PROSITE" id="PS50871">
    <property type="entry name" value="C1Q"/>
    <property type="match status" value="1"/>
</dbReference>
<organism>
    <name type="scientific">Homo sapiens</name>
    <name type="common">Human</name>
    <dbReference type="NCBI Taxonomy" id="9606"/>
    <lineage>
        <taxon>Eukaryota</taxon>
        <taxon>Metazoa</taxon>
        <taxon>Chordata</taxon>
        <taxon>Craniata</taxon>
        <taxon>Vertebrata</taxon>
        <taxon>Euteleostomi</taxon>
        <taxon>Mammalia</taxon>
        <taxon>Eutheria</taxon>
        <taxon>Euarchontoglires</taxon>
        <taxon>Primates</taxon>
        <taxon>Haplorrhini</taxon>
        <taxon>Catarrhini</taxon>
        <taxon>Hominidae</taxon>
        <taxon>Homo</taxon>
    </lineage>
</organism>
<comment type="function">
    <text evidence="1">Probable adipokine. Activates AMPK, AKT, and p44/42 MAPK signaling pathways.</text>
</comment>
<comment type="subunit">
    <text evidence="5">Interacts with CTRP9A and ADIPOQ. Forms heterotrimers and heterooligomeric complexes with CTRP9A.</text>
</comment>
<comment type="interaction">
    <interactant intactId="EBI-10828035">
        <id>B2RNN3</id>
    </interactant>
    <interactant intactId="EBI-5654640">
        <id>P0C862</id>
        <label>C1QTNF9</label>
    </interactant>
    <organismsDiffer>false</organismsDiffer>
    <experiments>5</experiments>
</comment>
<comment type="subcellular location">
    <subcellularLocation>
        <location evidence="5">Secreted</location>
    </subcellularLocation>
    <text>Heteromeric complex formation with CTRP9A or ADIPOQ is required for secretion, otherwise, it is retained in the endoplasmic reticulum.</text>
</comment>
<comment type="alternative products">
    <event type="alternative splicing"/>
    <isoform>
        <id>B2RNN3-1</id>
        <name>1</name>
        <sequence type="displayed"/>
    </isoform>
    <isoform>
        <id>B2RNN3-2</id>
        <name>2</name>
        <sequence type="described" ref="VSP_035153 VSP_035154"/>
    </isoform>
</comment>
<comment type="tissue specificity">
    <text evidence="5">Expressed at low levels. Not expressed in adipose tissues.</text>
</comment>
<proteinExistence type="evidence at protein level"/>